<evidence type="ECO:0000250" key="1"/>
<evidence type="ECO:0000305" key="2"/>
<protein>
    <recommendedName>
        <fullName>Fructokinase-2</fullName>
        <ecNumber>2.7.1.4</ecNumber>
    </recommendedName>
</protein>
<name>SCRK2_SOLHA</name>
<organism>
    <name type="scientific">Solanum habrochaites</name>
    <name type="common">Wild tomato</name>
    <name type="synonym">Lycopersicon hirsutum</name>
    <dbReference type="NCBI Taxonomy" id="62890"/>
    <lineage>
        <taxon>Eukaryota</taxon>
        <taxon>Viridiplantae</taxon>
        <taxon>Streptophyta</taxon>
        <taxon>Embryophyta</taxon>
        <taxon>Tracheophyta</taxon>
        <taxon>Spermatophyta</taxon>
        <taxon>Magnoliopsida</taxon>
        <taxon>eudicotyledons</taxon>
        <taxon>Gunneridae</taxon>
        <taxon>Pentapetalae</taxon>
        <taxon>asterids</taxon>
        <taxon>lamiids</taxon>
        <taxon>Solanales</taxon>
        <taxon>Solanaceae</taxon>
        <taxon>Solanoideae</taxon>
        <taxon>Solaneae</taxon>
        <taxon>Solanum</taxon>
        <taxon>Solanum subgen. Lycopersicon</taxon>
    </lineage>
</organism>
<accession>Q7XJ81</accession>
<reference key="1">
    <citation type="submission" date="2003-06" db="EMBL/GenBank/DDBJ databases">
        <authorList>
            <person name="Levin I."/>
            <person name="Gilboa N."/>
            <person name="Cincarevsky F."/>
            <person name="Oguz I."/>
            <person name="Petrikov M."/>
            <person name="Yeselson Y."/>
            <person name="Shen S."/>
            <person name="Schaffer A.A."/>
            <person name="Bar M."/>
        </authorList>
    </citation>
    <scope>NUCLEOTIDE SEQUENCE [MRNA]</scope>
</reference>
<feature type="chain" id="PRO_0000252669" description="Fructokinase-2">
    <location>
        <begin position="1"/>
        <end position="328"/>
    </location>
</feature>
<keyword id="KW-0067">ATP-binding</keyword>
<keyword id="KW-0119">Carbohydrate metabolism</keyword>
<keyword id="KW-0418">Kinase</keyword>
<keyword id="KW-0547">Nucleotide-binding</keyword>
<keyword id="KW-0808">Transferase</keyword>
<proteinExistence type="evidence at transcript level"/>
<gene>
    <name type="primary">FRK2</name>
</gene>
<sequence>MAVNGASSSGLIVSFGEMLIDFVPTVSGVSLAEAPGFLKAPGGAPANVAIAVTRLGGRSAFVGKLGDDEFGHMLAGILKTNGVQADGINFDKGARTALAFVTLRADGEREFMFYRNPSADMLLTPAELNLDLIRSAKVFHYGSISLIVEPCRAAHMKAMEVAKEAGALLSYDPNLRLPLWPSAEEAKKQIKSIWDSADVIKVSDVELEFLTGSNKIDDESAMSLWHPNLKLLLVTLGEKGCNYYTKKFHGTVGGFHVKTVDTTGAGDSFVGALLTKIVDDQTILADEARLKEVLRFSCACGAITTTKKGAIPALPTASEALTLLKGGA</sequence>
<comment type="function">
    <text evidence="1">May play an important role in maintaining the flux of carbon towards starch formation.</text>
</comment>
<comment type="catalytic activity">
    <reaction>
        <text>D-fructose + ATP = D-fructose 6-phosphate + ADP + H(+)</text>
        <dbReference type="Rhea" id="RHEA:16125"/>
        <dbReference type="ChEBI" id="CHEBI:15378"/>
        <dbReference type="ChEBI" id="CHEBI:30616"/>
        <dbReference type="ChEBI" id="CHEBI:37721"/>
        <dbReference type="ChEBI" id="CHEBI:61527"/>
        <dbReference type="ChEBI" id="CHEBI:456216"/>
        <dbReference type="EC" id="2.7.1.4"/>
    </reaction>
</comment>
<comment type="pathway">
    <text>Glycan biosynthesis; starch biosynthesis.</text>
</comment>
<comment type="similarity">
    <text evidence="2">Belongs to the carbohydrate kinase PfkB family.</text>
</comment>
<dbReference type="EC" id="2.7.1.4"/>
<dbReference type="EMBL" id="AY325501">
    <property type="protein sequence ID" value="AAP87283.1"/>
    <property type="molecule type" value="mRNA"/>
</dbReference>
<dbReference type="SMR" id="Q7XJ81"/>
<dbReference type="UniPathway" id="UPA00152"/>
<dbReference type="GO" id="GO:0005829">
    <property type="term" value="C:cytosol"/>
    <property type="evidence" value="ECO:0007669"/>
    <property type="project" value="TreeGrafter"/>
</dbReference>
<dbReference type="GO" id="GO:0005524">
    <property type="term" value="F:ATP binding"/>
    <property type="evidence" value="ECO:0007669"/>
    <property type="project" value="UniProtKB-KW"/>
</dbReference>
<dbReference type="GO" id="GO:0008865">
    <property type="term" value="F:fructokinase activity"/>
    <property type="evidence" value="ECO:0007669"/>
    <property type="project" value="UniProtKB-EC"/>
</dbReference>
<dbReference type="GO" id="GO:0006000">
    <property type="term" value="P:fructose metabolic process"/>
    <property type="evidence" value="ECO:0007669"/>
    <property type="project" value="TreeGrafter"/>
</dbReference>
<dbReference type="GO" id="GO:0019252">
    <property type="term" value="P:starch biosynthetic process"/>
    <property type="evidence" value="ECO:0007669"/>
    <property type="project" value="UniProtKB-UniPathway"/>
</dbReference>
<dbReference type="CDD" id="cd01167">
    <property type="entry name" value="bac_FRK"/>
    <property type="match status" value="1"/>
</dbReference>
<dbReference type="FunFam" id="3.40.1190.20:FF:000005">
    <property type="entry name" value="Probable fructokinase-2"/>
    <property type="match status" value="1"/>
</dbReference>
<dbReference type="Gene3D" id="3.40.1190.20">
    <property type="match status" value="1"/>
</dbReference>
<dbReference type="InterPro" id="IPR002173">
    <property type="entry name" value="Carboh/pur_kinase_PfkB_CS"/>
</dbReference>
<dbReference type="InterPro" id="IPR050306">
    <property type="entry name" value="PfkB_Carbo_kinase"/>
</dbReference>
<dbReference type="InterPro" id="IPR011611">
    <property type="entry name" value="PfkB_dom"/>
</dbReference>
<dbReference type="InterPro" id="IPR002139">
    <property type="entry name" value="Ribo/fructo_kinase"/>
</dbReference>
<dbReference type="InterPro" id="IPR029056">
    <property type="entry name" value="Ribokinase-like"/>
</dbReference>
<dbReference type="PANTHER" id="PTHR43085:SF24">
    <property type="entry name" value="FRUCTOKINASE-4-RELATED"/>
    <property type="match status" value="1"/>
</dbReference>
<dbReference type="PANTHER" id="PTHR43085">
    <property type="entry name" value="HEXOKINASE FAMILY MEMBER"/>
    <property type="match status" value="1"/>
</dbReference>
<dbReference type="Pfam" id="PF00294">
    <property type="entry name" value="PfkB"/>
    <property type="match status" value="1"/>
</dbReference>
<dbReference type="PRINTS" id="PR00990">
    <property type="entry name" value="RIBOKINASE"/>
</dbReference>
<dbReference type="SUPFAM" id="SSF53613">
    <property type="entry name" value="Ribokinase-like"/>
    <property type="match status" value="1"/>
</dbReference>
<dbReference type="PROSITE" id="PS00583">
    <property type="entry name" value="PFKB_KINASES_1"/>
    <property type="match status" value="1"/>
</dbReference>
<dbReference type="PROSITE" id="PS00584">
    <property type="entry name" value="PFKB_KINASES_2"/>
    <property type="match status" value="1"/>
</dbReference>